<proteinExistence type="inferred from homology"/>
<evidence type="ECO:0000250" key="1"/>
<evidence type="ECO:0000255" key="2"/>
<evidence type="ECO:0000305" key="3"/>
<name>TVP18_PICST</name>
<feature type="chain" id="PRO_0000343027" description="Golgi apparatus membrane protein TVP18">
    <location>
        <begin position="1"/>
        <end position="172"/>
    </location>
</feature>
<feature type="transmembrane region" description="Helical" evidence="2">
    <location>
        <begin position="25"/>
        <end position="45"/>
    </location>
</feature>
<feature type="transmembrane region" description="Helical" evidence="2">
    <location>
        <begin position="48"/>
        <end position="68"/>
    </location>
</feature>
<feature type="transmembrane region" description="Helical" evidence="2">
    <location>
        <begin position="100"/>
        <end position="116"/>
    </location>
</feature>
<feature type="transmembrane region" description="Helical" evidence="2">
    <location>
        <begin position="123"/>
        <end position="140"/>
    </location>
</feature>
<feature type="glycosylation site" description="N-linked (GlcNAc...) asparagine" evidence="2">
    <location>
        <position position="24"/>
    </location>
</feature>
<keyword id="KW-0325">Glycoprotein</keyword>
<keyword id="KW-0333">Golgi apparatus</keyword>
<keyword id="KW-0472">Membrane</keyword>
<keyword id="KW-1185">Reference proteome</keyword>
<keyword id="KW-0812">Transmembrane</keyword>
<keyword id="KW-1133">Transmembrane helix</keyword>
<reference key="1">
    <citation type="journal article" date="2007" name="Nat. Biotechnol.">
        <title>Genome sequence of the lignocellulose-bioconverting and xylose-fermenting yeast Pichia stipitis.</title>
        <authorList>
            <person name="Jeffries T.W."/>
            <person name="Grigoriev I.V."/>
            <person name="Grimwood J."/>
            <person name="Laplaza J.M."/>
            <person name="Aerts A."/>
            <person name="Salamov A."/>
            <person name="Schmutz J."/>
            <person name="Lindquist E."/>
            <person name="Dehal P."/>
            <person name="Shapiro H."/>
            <person name="Jin Y.-S."/>
            <person name="Passoth V."/>
            <person name="Richardson P.M."/>
        </authorList>
    </citation>
    <scope>NUCLEOTIDE SEQUENCE [LARGE SCALE GENOMIC DNA]</scope>
    <source>
        <strain>ATCC 58785 / CBS 6054 / NBRC 10063 / NRRL Y-11545</strain>
    </source>
</reference>
<accession>A3LPS1</accession>
<protein>
    <recommendedName>
        <fullName>Golgi apparatus membrane protein TVP18</fullName>
    </recommendedName>
</protein>
<comment type="function">
    <text evidence="1">Golgi membrane protein involved in vesicular trafficking.</text>
</comment>
<comment type="subcellular location">
    <subcellularLocation>
        <location evidence="1">Golgi apparatus membrane</location>
        <topology evidence="1">Multi-pass membrane protein</topology>
    </subcellularLocation>
</comment>
<comment type="similarity">
    <text evidence="3">Belongs to the TVP18 family.</text>
</comment>
<sequence>MAFSIQSIFSNIFSGLSADFKKKNFSLYGQWVGIISILLCLALGVANIFHASIVIVFSIICIVQGLVVTLVEMPFLLKICPFTETFTNFIKNFDANWPRCGFYLLNAAIQWVSIAVMATSLIVVACFFTVAGGCYALAAITHQEYLKSSIQVTGSPDSVEGQIGQHVVRNVL</sequence>
<gene>
    <name type="primary">TVP18</name>
    <name type="ORF">PICST_35158</name>
</gene>
<dbReference type="EMBL" id="CP000496">
    <property type="protein sequence ID" value="ABN64544.1"/>
    <property type="molecule type" value="Genomic_DNA"/>
</dbReference>
<dbReference type="RefSeq" id="XP_001382573.1">
    <property type="nucleotide sequence ID" value="XM_001382536.1"/>
</dbReference>
<dbReference type="FunCoup" id="A3LPS1">
    <property type="interactions" value="61"/>
</dbReference>
<dbReference type="STRING" id="322104.A3LPS1"/>
<dbReference type="GlyCosmos" id="A3LPS1">
    <property type="glycosylation" value="1 site, No reported glycans"/>
</dbReference>
<dbReference type="GeneID" id="4837208"/>
<dbReference type="KEGG" id="pic:PICST_35158"/>
<dbReference type="eggNOG" id="ENOG502S3AC">
    <property type="taxonomic scope" value="Eukaryota"/>
</dbReference>
<dbReference type="HOGENOM" id="CLU_118698_1_0_1"/>
<dbReference type="InParanoid" id="A3LPS1"/>
<dbReference type="OMA" id="IYAQWLG"/>
<dbReference type="OrthoDB" id="5591789at2759"/>
<dbReference type="Proteomes" id="UP000002258">
    <property type="component" value="Chromosome 2"/>
</dbReference>
<dbReference type="GO" id="GO:0000139">
    <property type="term" value="C:Golgi membrane"/>
    <property type="evidence" value="ECO:0007669"/>
    <property type="project" value="UniProtKB-SubCell"/>
</dbReference>
<dbReference type="GO" id="GO:0016192">
    <property type="term" value="P:vesicle-mediated transport"/>
    <property type="evidence" value="ECO:0007669"/>
    <property type="project" value="TreeGrafter"/>
</dbReference>
<dbReference type="InterPro" id="IPR019365">
    <property type="entry name" value="TVP18/Ca-channel_flower"/>
</dbReference>
<dbReference type="PANTHER" id="PTHR13314">
    <property type="entry name" value="CALCIUM CHANNEL FLOWER HOMOLOG"/>
    <property type="match status" value="1"/>
</dbReference>
<dbReference type="PANTHER" id="PTHR13314:SF2">
    <property type="entry name" value="CALCIUM CHANNEL FLOWER HOMOLOG"/>
    <property type="match status" value="1"/>
</dbReference>
<dbReference type="Pfam" id="PF10233">
    <property type="entry name" value="Cg6151-P"/>
    <property type="match status" value="1"/>
</dbReference>
<dbReference type="SMART" id="SM01077">
    <property type="entry name" value="Cg6151-P"/>
    <property type="match status" value="1"/>
</dbReference>
<organism>
    <name type="scientific">Scheffersomyces stipitis (strain ATCC 58785 / CBS 6054 / NBRC 10063 / NRRL Y-11545)</name>
    <name type="common">Yeast</name>
    <name type="synonym">Pichia stipitis</name>
    <dbReference type="NCBI Taxonomy" id="322104"/>
    <lineage>
        <taxon>Eukaryota</taxon>
        <taxon>Fungi</taxon>
        <taxon>Dikarya</taxon>
        <taxon>Ascomycota</taxon>
        <taxon>Saccharomycotina</taxon>
        <taxon>Pichiomycetes</taxon>
        <taxon>Debaryomycetaceae</taxon>
        <taxon>Scheffersomyces</taxon>
    </lineage>
</organism>